<protein>
    <recommendedName>
        <fullName evidence="1">Dihydroorotase</fullName>
        <shortName evidence="1">DHOase</shortName>
        <ecNumber evidence="1">3.5.2.3</ecNumber>
    </recommendedName>
</protein>
<organism>
    <name type="scientific">Cupriavidus pinatubonensis (strain JMP 134 / LMG 1197)</name>
    <name type="common">Cupriavidus necator (strain JMP 134)</name>
    <dbReference type="NCBI Taxonomy" id="264198"/>
    <lineage>
        <taxon>Bacteria</taxon>
        <taxon>Pseudomonadati</taxon>
        <taxon>Pseudomonadota</taxon>
        <taxon>Betaproteobacteria</taxon>
        <taxon>Burkholderiales</taxon>
        <taxon>Burkholderiaceae</taxon>
        <taxon>Cupriavidus</taxon>
    </lineage>
</organism>
<feature type="chain" id="PRO_1000024042" description="Dihydroorotase">
    <location>
        <begin position="1"/>
        <end position="344"/>
    </location>
</feature>
<feature type="active site" evidence="1">
    <location>
        <position position="248"/>
    </location>
</feature>
<feature type="binding site" evidence="1">
    <location>
        <position position="14"/>
    </location>
    <ligand>
        <name>Zn(2+)</name>
        <dbReference type="ChEBI" id="CHEBI:29105"/>
        <label>1</label>
    </ligand>
</feature>
<feature type="binding site" evidence="1">
    <location>
        <begin position="16"/>
        <end position="18"/>
    </location>
    <ligand>
        <name>substrate</name>
    </ligand>
</feature>
<feature type="binding site" evidence="1">
    <location>
        <position position="16"/>
    </location>
    <ligand>
        <name>Zn(2+)</name>
        <dbReference type="ChEBI" id="CHEBI:29105"/>
        <label>1</label>
    </ligand>
</feature>
<feature type="binding site" evidence="1">
    <location>
        <position position="42"/>
    </location>
    <ligand>
        <name>substrate</name>
    </ligand>
</feature>
<feature type="binding site" description="via carbamate group" evidence="1">
    <location>
        <position position="100"/>
    </location>
    <ligand>
        <name>Zn(2+)</name>
        <dbReference type="ChEBI" id="CHEBI:29105"/>
        <label>1</label>
    </ligand>
</feature>
<feature type="binding site" description="via carbamate group" evidence="1">
    <location>
        <position position="100"/>
    </location>
    <ligand>
        <name>Zn(2+)</name>
        <dbReference type="ChEBI" id="CHEBI:29105"/>
        <label>2</label>
    </ligand>
</feature>
<feature type="binding site" evidence="1">
    <location>
        <position position="137"/>
    </location>
    <ligand>
        <name>substrate</name>
    </ligand>
</feature>
<feature type="binding site" evidence="1">
    <location>
        <position position="137"/>
    </location>
    <ligand>
        <name>Zn(2+)</name>
        <dbReference type="ChEBI" id="CHEBI:29105"/>
        <label>2</label>
    </ligand>
</feature>
<feature type="binding site" evidence="1">
    <location>
        <position position="175"/>
    </location>
    <ligand>
        <name>Zn(2+)</name>
        <dbReference type="ChEBI" id="CHEBI:29105"/>
        <label>2</label>
    </ligand>
</feature>
<feature type="binding site" evidence="1">
    <location>
        <position position="220"/>
    </location>
    <ligand>
        <name>substrate</name>
    </ligand>
</feature>
<feature type="binding site" evidence="1">
    <location>
        <position position="248"/>
    </location>
    <ligand>
        <name>Zn(2+)</name>
        <dbReference type="ChEBI" id="CHEBI:29105"/>
        <label>1</label>
    </ligand>
</feature>
<feature type="binding site" evidence="1">
    <location>
        <position position="252"/>
    </location>
    <ligand>
        <name>substrate</name>
    </ligand>
</feature>
<feature type="binding site" evidence="1">
    <location>
        <position position="264"/>
    </location>
    <ligand>
        <name>substrate</name>
    </ligand>
</feature>
<feature type="modified residue" description="N6-carboxylysine" evidence="1">
    <location>
        <position position="100"/>
    </location>
</feature>
<dbReference type="EC" id="3.5.2.3" evidence="1"/>
<dbReference type="EMBL" id="CP000090">
    <property type="protein sequence ID" value="AAZ59846.1"/>
    <property type="molecule type" value="Genomic_DNA"/>
</dbReference>
<dbReference type="SMR" id="Q475T7"/>
<dbReference type="STRING" id="264198.Reut_A0464"/>
<dbReference type="KEGG" id="reu:Reut_A0464"/>
<dbReference type="eggNOG" id="COG0418">
    <property type="taxonomic scope" value="Bacteria"/>
</dbReference>
<dbReference type="HOGENOM" id="CLU_041558_1_0_4"/>
<dbReference type="OrthoDB" id="9808095at2"/>
<dbReference type="UniPathway" id="UPA00070">
    <property type="reaction ID" value="UER00117"/>
</dbReference>
<dbReference type="GO" id="GO:0005829">
    <property type="term" value="C:cytosol"/>
    <property type="evidence" value="ECO:0007669"/>
    <property type="project" value="TreeGrafter"/>
</dbReference>
<dbReference type="GO" id="GO:0004151">
    <property type="term" value="F:dihydroorotase activity"/>
    <property type="evidence" value="ECO:0007669"/>
    <property type="project" value="UniProtKB-UniRule"/>
</dbReference>
<dbReference type="GO" id="GO:0008270">
    <property type="term" value="F:zinc ion binding"/>
    <property type="evidence" value="ECO:0007669"/>
    <property type="project" value="UniProtKB-UniRule"/>
</dbReference>
<dbReference type="GO" id="GO:0006207">
    <property type="term" value="P:'de novo' pyrimidine nucleobase biosynthetic process"/>
    <property type="evidence" value="ECO:0007669"/>
    <property type="project" value="TreeGrafter"/>
</dbReference>
<dbReference type="GO" id="GO:0044205">
    <property type="term" value="P:'de novo' UMP biosynthetic process"/>
    <property type="evidence" value="ECO:0007669"/>
    <property type="project" value="UniProtKB-UniRule"/>
</dbReference>
<dbReference type="CDD" id="cd01294">
    <property type="entry name" value="DHOase"/>
    <property type="match status" value="1"/>
</dbReference>
<dbReference type="FunFam" id="3.20.20.140:FF:000006">
    <property type="entry name" value="Dihydroorotase"/>
    <property type="match status" value="1"/>
</dbReference>
<dbReference type="Gene3D" id="3.20.20.140">
    <property type="entry name" value="Metal-dependent hydrolases"/>
    <property type="match status" value="1"/>
</dbReference>
<dbReference type="HAMAP" id="MF_00219">
    <property type="entry name" value="PyrC_classII"/>
    <property type="match status" value="1"/>
</dbReference>
<dbReference type="InterPro" id="IPR006680">
    <property type="entry name" value="Amidohydro-rel"/>
</dbReference>
<dbReference type="InterPro" id="IPR004721">
    <property type="entry name" value="DHOdimr"/>
</dbReference>
<dbReference type="InterPro" id="IPR002195">
    <property type="entry name" value="Dihydroorotase_CS"/>
</dbReference>
<dbReference type="InterPro" id="IPR032466">
    <property type="entry name" value="Metal_Hydrolase"/>
</dbReference>
<dbReference type="NCBIfam" id="TIGR00856">
    <property type="entry name" value="pyrC_dimer"/>
    <property type="match status" value="1"/>
</dbReference>
<dbReference type="PANTHER" id="PTHR43137">
    <property type="entry name" value="DIHYDROOROTASE"/>
    <property type="match status" value="1"/>
</dbReference>
<dbReference type="PANTHER" id="PTHR43137:SF1">
    <property type="entry name" value="DIHYDROOROTASE"/>
    <property type="match status" value="1"/>
</dbReference>
<dbReference type="Pfam" id="PF01979">
    <property type="entry name" value="Amidohydro_1"/>
    <property type="match status" value="1"/>
</dbReference>
<dbReference type="PIRSF" id="PIRSF001237">
    <property type="entry name" value="DHOdimr"/>
    <property type="match status" value="1"/>
</dbReference>
<dbReference type="SUPFAM" id="SSF51556">
    <property type="entry name" value="Metallo-dependent hydrolases"/>
    <property type="match status" value="1"/>
</dbReference>
<dbReference type="PROSITE" id="PS00482">
    <property type="entry name" value="DIHYDROOROTASE_1"/>
    <property type="match status" value="1"/>
</dbReference>
<dbReference type="PROSITE" id="PS00483">
    <property type="entry name" value="DIHYDROOROTASE_2"/>
    <property type="match status" value="1"/>
</dbReference>
<comment type="function">
    <text evidence="1">Catalyzes the reversible cyclization of carbamoyl aspartate to dihydroorotate.</text>
</comment>
<comment type="catalytic activity">
    <reaction evidence="1">
        <text>(S)-dihydroorotate + H2O = N-carbamoyl-L-aspartate + H(+)</text>
        <dbReference type="Rhea" id="RHEA:24296"/>
        <dbReference type="ChEBI" id="CHEBI:15377"/>
        <dbReference type="ChEBI" id="CHEBI:15378"/>
        <dbReference type="ChEBI" id="CHEBI:30864"/>
        <dbReference type="ChEBI" id="CHEBI:32814"/>
        <dbReference type="EC" id="3.5.2.3"/>
    </reaction>
</comment>
<comment type="cofactor">
    <cofactor evidence="1">
        <name>Zn(2+)</name>
        <dbReference type="ChEBI" id="CHEBI:29105"/>
    </cofactor>
    <text evidence="1">Binds 2 Zn(2+) ions per subunit.</text>
</comment>
<comment type="pathway">
    <text evidence="1">Pyrimidine metabolism; UMP biosynthesis via de novo pathway; (S)-dihydroorotate from bicarbonate: step 3/3.</text>
</comment>
<comment type="subunit">
    <text evidence="1">Homodimer.</text>
</comment>
<comment type="similarity">
    <text evidence="1">Belongs to the metallo-dependent hydrolases superfamily. DHOase family. Class II DHOase subfamily.</text>
</comment>
<accession>Q475T7</accession>
<keyword id="KW-0378">Hydrolase</keyword>
<keyword id="KW-0479">Metal-binding</keyword>
<keyword id="KW-0665">Pyrimidine biosynthesis</keyword>
<keyword id="KW-0862">Zinc</keyword>
<sequence length="344" mass="37509">MTQKLTITRPDDWHLHLRDGAALAAVLPDTARQFGRAIIMPNLKPPVTTVEQAQAYRARILAALPAGMSFEPLMTLYLTDNTPAEEIVAAKASGFVHGVKLYPAGATTNSDAGVTDIRRCAGALEAMQRVGLPLLVHGEVTDGDIDIFDREAVFIDRVMTPLRRDFPELKVVFEHITTRDAAQYVRDASGPVGATITAHHLLYNRNAIFTGGIRPHYYCLPVLKRETHREALVAAATSGSDRFFLGTDSAPHARGLKEHACGCAGCYTALHAMELYAEAFDAAGALDKLEAFASFNGPAFYGLPRNTGTLTLEREDWQLPAELPYGDATLVPLRAGETLRWKAR</sequence>
<gene>
    <name evidence="1" type="primary">pyrC</name>
    <name type="ordered locus">Reut_A0464</name>
</gene>
<name>PYRC_CUPPJ</name>
<evidence type="ECO:0000255" key="1">
    <source>
        <dbReference type="HAMAP-Rule" id="MF_00219"/>
    </source>
</evidence>
<reference key="1">
    <citation type="journal article" date="2010" name="PLoS ONE">
        <title>The complete multipartite genome sequence of Cupriavidus necator JMP134, a versatile pollutant degrader.</title>
        <authorList>
            <person name="Lykidis A."/>
            <person name="Perez-Pantoja D."/>
            <person name="Ledger T."/>
            <person name="Mavromatis K."/>
            <person name="Anderson I.J."/>
            <person name="Ivanova N.N."/>
            <person name="Hooper S.D."/>
            <person name="Lapidus A."/>
            <person name="Lucas S."/>
            <person name="Gonzalez B."/>
            <person name="Kyrpides N.C."/>
        </authorList>
    </citation>
    <scope>NUCLEOTIDE SEQUENCE [LARGE SCALE GENOMIC DNA]</scope>
    <source>
        <strain>JMP134 / LMG 1197</strain>
    </source>
</reference>
<proteinExistence type="inferred from homology"/>